<sequence>MINSVGVVRKEAENCNCLQVFFVSGSFKVDSVEAKKKEENFRETLRDMANSKYEYVKSFELEDEVMLPNLMVVRIDGRDFSRFSQVHEFEKPNDETALNLMNSCSAAVLEEFPDIIFAYGYSDEYSFVFKKTSRFYQRRASKILSLVASFFAAVYVTKWKEFFPQRKLLYAPSFSSKVVSCASAEVLQAYLAWRQQDCHANNQYDTCFWMLVKSGKSVSETQEILKDTQKQQKNELLFQKFGINYKTLPELFRQGSCLFKKKVEETVKHDENGNPVKRLRRKAVFVHSENIAGRSFWNEQPSLYNDLGHFTKDIGKIEPDFIRSFQFENKLLPLTWVVVRIDGCHFHRFSDVHEFEKPNDEQALKLMNSCAVAVLEEFEDIHFAYGVSDEYSFVLKKESELYKRQSSKIISAVASFFTSTYVLQWGEFFPHKELKYPPSFDGRAVCYPTYNILLDYLAWRQVDCHINNQYNTCFWMLVKSGKNKTQSQDYLKGTQTREKNELLSRQFGIEYNSLPVIFRMGSSVFRLKEAENGVVSGKKLEGEVVVDHCNIIERCFWEEHLHILSYS</sequence>
<evidence type="ECO:0000250" key="1"/>
<evidence type="ECO:0000269" key="2">
    <source>
    </source>
</evidence>
<evidence type="ECO:0000305" key="3"/>
<evidence type="ECO:0007744" key="4">
    <source>
    </source>
</evidence>
<organism>
    <name type="scientific">Arabidopsis thaliana</name>
    <name type="common">Mouse-ear cress</name>
    <dbReference type="NCBI Taxonomy" id="3702"/>
    <lineage>
        <taxon>Eukaryota</taxon>
        <taxon>Viridiplantae</taxon>
        <taxon>Streptophyta</taxon>
        <taxon>Embryophyta</taxon>
        <taxon>Tracheophyta</taxon>
        <taxon>Spermatophyta</taxon>
        <taxon>Magnoliopsida</taxon>
        <taxon>eudicotyledons</taxon>
        <taxon>Gunneridae</taxon>
        <taxon>Pentapetalae</taxon>
        <taxon>rosids</taxon>
        <taxon>malvids</taxon>
        <taxon>Brassicales</taxon>
        <taxon>Brassicaceae</taxon>
        <taxon>Camelineae</taxon>
        <taxon>Arabidopsis</taxon>
    </lineage>
</organism>
<gene>
    <name type="primary">THG1</name>
    <name type="ordered locus">At2g31580</name>
    <name type="ORF">T9H9.10</name>
</gene>
<dbReference type="EC" id="2.7.7.79" evidence="2"/>
<dbReference type="EMBL" id="AC007071">
    <property type="protein sequence ID" value="AAD24854.2"/>
    <property type="status" value="ALT_SEQ"/>
    <property type="molecule type" value="Genomic_DNA"/>
</dbReference>
<dbReference type="EMBL" id="CP002685">
    <property type="protein sequence ID" value="AEC08563.1"/>
    <property type="molecule type" value="Genomic_DNA"/>
</dbReference>
<dbReference type="PIR" id="E84722">
    <property type="entry name" value="E84722"/>
</dbReference>
<dbReference type="RefSeq" id="NP_565727.2">
    <property type="nucleotide sequence ID" value="NM_128715.3"/>
</dbReference>
<dbReference type="SMR" id="F4IRQ5"/>
<dbReference type="FunCoup" id="F4IRQ5">
    <property type="interactions" value="170"/>
</dbReference>
<dbReference type="STRING" id="3702.F4IRQ5"/>
<dbReference type="iPTMnet" id="F4IRQ5"/>
<dbReference type="PaxDb" id="3702-AT2G31580.1"/>
<dbReference type="EnsemblPlants" id="AT2G31580.1">
    <property type="protein sequence ID" value="AT2G31580.1"/>
    <property type="gene ID" value="AT2G31580"/>
</dbReference>
<dbReference type="GeneID" id="817716"/>
<dbReference type="Gramene" id="AT2G31580.1">
    <property type="protein sequence ID" value="AT2G31580.1"/>
    <property type="gene ID" value="AT2G31580"/>
</dbReference>
<dbReference type="KEGG" id="ath:AT2G31580"/>
<dbReference type="Araport" id="AT2G31580"/>
<dbReference type="TAIR" id="AT2G31580">
    <property type="gene designation" value="ICA1"/>
</dbReference>
<dbReference type="eggNOG" id="KOG2721">
    <property type="taxonomic scope" value="Eukaryota"/>
</dbReference>
<dbReference type="HOGENOM" id="CLU_044271_4_0_1"/>
<dbReference type="InParanoid" id="F4IRQ5"/>
<dbReference type="OrthoDB" id="62560at2759"/>
<dbReference type="PRO" id="PR:F4IRQ5"/>
<dbReference type="Proteomes" id="UP000006548">
    <property type="component" value="Chromosome 2"/>
</dbReference>
<dbReference type="ExpressionAtlas" id="F4IRQ5">
    <property type="expression patterns" value="baseline and differential"/>
</dbReference>
<dbReference type="GO" id="GO:0005654">
    <property type="term" value="C:nucleoplasm"/>
    <property type="evidence" value="ECO:0000314"/>
    <property type="project" value="UniProtKB"/>
</dbReference>
<dbReference type="GO" id="GO:0005525">
    <property type="term" value="F:GTP binding"/>
    <property type="evidence" value="ECO:0007669"/>
    <property type="project" value="UniProtKB-KW"/>
</dbReference>
<dbReference type="GO" id="GO:0000287">
    <property type="term" value="F:magnesium ion binding"/>
    <property type="evidence" value="ECO:0007669"/>
    <property type="project" value="InterPro"/>
</dbReference>
<dbReference type="GO" id="GO:0008193">
    <property type="term" value="F:tRNA guanylyltransferase activity"/>
    <property type="evidence" value="ECO:0000304"/>
    <property type="project" value="UniProtKB"/>
</dbReference>
<dbReference type="GO" id="GO:0006974">
    <property type="term" value="P:DNA damage response"/>
    <property type="evidence" value="ECO:0000315"/>
    <property type="project" value="TAIR"/>
</dbReference>
<dbReference type="GO" id="GO:0000086">
    <property type="term" value="P:G2/M transition of mitotic cell cycle"/>
    <property type="evidence" value="ECO:0000315"/>
    <property type="project" value="TAIR"/>
</dbReference>
<dbReference type="GO" id="GO:0045787">
    <property type="term" value="P:positive regulation of cell cycle"/>
    <property type="evidence" value="ECO:0000315"/>
    <property type="project" value="TAIR"/>
</dbReference>
<dbReference type="GO" id="GO:0006400">
    <property type="term" value="P:tRNA modification"/>
    <property type="evidence" value="ECO:0000304"/>
    <property type="project" value="UniProtKB"/>
</dbReference>
<dbReference type="FunFam" id="3.30.70.3000:FF:000002">
    <property type="entry name" value="tRNA(His) guanylyltransferase 1"/>
    <property type="match status" value="2"/>
</dbReference>
<dbReference type="Gene3D" id="3.30.70.3000">
    <property type="match status" value="2"/>
</dbReference>
<dbReference type="InterPro" id="IPR025845">
    <property type="entry name" value="Thg1_C_dom"/>
</dbReference>
<dbReference type="InterPro" id="IPR024956">
    <property type="entry name" value="tRNAHis_GuaTrfase_cat"/>
</dbReference>
<dbReference type="InterPro" id="IPR007537">
    <property type="entry name" value="tRNAHis_GuaTrfase_Thg1"/>
</dbReference>
<dbReference type="InterPro" id="IPR038469">
    <property type="entry name" value="tRNAHis_GuaTrfase_Thg1_sf"/>
</dbReference>
<dbReference type="PANTHER" id="PTHR12729">
    <property type="entry name" value="TRNA(HIS) GUANYLYLTRANSFERASE-RELATED"/>
    <property type="match status" value="1"/>
</dbReference>
<dbReference type="PANTHER" id="PTHR12729:SF6">
    <property type="entry name" value="TRNA(HIS) GUANYLYLTRANSFERASE-RELATED"/>
    <property type="match status" value="1"/>
</dbReference>
<dbReference type="Pfam" id="PF04446">
    <property type="entry name" value="Thg1"/>
    <property type="match status" value="2"/>
</dbReference>
<dbReference type="Pfam" id="PF14413">
    <property type="entry name" value="Thg1C"/>
    <property type="match status" value="2"/>
</dbReference>
<accession>F4IRQ5</accession>
<accession>Q9SIQ0</accession>
<proteinExistence type="evidence at protein level"/>
<name>THG1_ARATH</name>
<feature type="chain" id="PRO_0000420271" description="tRNA(His) guanylyltransferase 1">
    <location>
        <begin position="1"/>
        <end position="567"/>
    </location>
</feature>
<feature type="binding site" evidence="1">
    <location>
        <begin position="342"/>
        <end position="347"/>
    </location>
    <ligand>
        <name>GTP</name>
        <dbReference type="ChEBI" id="CHEBI:37565"/>
    </ligand>
</feature>
<feature type="binding site" evidence="1">
    <location>
        <position position="342"/>
    </location>
    <ligand>
        <name>Mg(2+)</name>
        <dbReference type="ChEBI" id="CHEBI:18420"/>
        <label>1</label>
        <note>catalytic</note>
    </ligand>
</feature>
<feature type="binding site" evidence="1">
    <location>
        <position position="342"/>
    </location>
    <ligand>
        <name>Mg(2+)</name>
        <dbReference type="ChEBI" id="CHEBI:18420"/>
        <label>2</label>
        <note>catalytic</note>
    </ligand>
</feature>
<feature type="binding site" evidence="1">
    <location>
        <position position="343"/>
    </location>
    <ligand>
        <name>Mg(2+)</name>
        <dbReference type="ChEBI" id="CHEBI:18420"/>
        <label>1</label>
        <note>catalytic</note>
    </ligand>
</feature>
<feature type="binding site" evidence="1">
    <location>
        <begin position="388"/>
        <end position="389"/>
    </location>
    <ligand>
        <name>GTP</name>
        <dbReference type="ChEBI" id="CHEBI:37565"/>
    </ligand>
</feature>
<feature type="binding site" evidence="1">
    <location>
        <position position="389"/>
    </location>
    <ligand>
        <name>Mg(2+)</name>
        <dbReference type="ChEBI" id="CHEBI:18420"/>
        <label>1</label>
        <note>catalytic</note>
    </ligand>
</feature>
<feature type="binding site" evidence="1">
    <location>
        <position position="389"/>
    </location>
    <ligand>
        <name>Mg(2+)</name>
        <dbReference type="ChEBI" id="CHEBI:18420"/>
        <label>2</label>
        <note>catalytic</note>
    </ligand>
</feature>
<feature type="cross-link" description="Glycyl lysine isopeptide (Lys-Gly) (interchain with G-Cter in ubiquitin)" evidence="4">
    <location>
        <position position="397"/>
    </location>
</feature>
<feature type="cross-link" description="Glycyl lysine isopeptide (Lys-Gly) (interchain with G-Cter in ubiquitin)" evidence="4">
    <location>
        <position position="403"/>
    </location>
</feature>
<protein>
    <recommendedName>
        <fullName>tRNA(His) guanylyltransferase 1</fullName>
        <ecNumber evidence="2">2.7.7.79</ecNumber>
    </recommendedName>
</protein>
<keyword id="KW-0342">GTP-binding</keyword>
<keyword id="KW-1017">Isopeptide bond</keyword>
<keyword id="KW-0460">Magnesium</keyword>
<keyword id="KW-0479">Metal-binding</keyword>
<keyword id="KW-0547">Nucleotide-binding</keyword>
<keyword id="KW-0548">Nucleotidyltransferase</keyword>
<keyword id="KW-0539">Nucleus</keyword>
<keyword id="KW-1185">Reference proteome</keyword>
<keyword id="KW-0808">Transferase</keyword>
<keyword id="KW-0819">tRNA processing</keyword>
<keyword id="KW-0832">Ubl conjugation</keyword>
<comment type="function">
    <text evidence="2">Adds a GMP to the 5'-end of tRNA(His) after transcription and RNase P cleavage.</text>
</comment>
<comment type="catalytic activity">
    <reaction evidence="2">
        <text>a 5'-end ribonucleotide-tRNA(His) + GTP + ATP + H2O = a 5'-end phospho-guanosine-ribonucleotide-tRNA(His) + AMP + 2 diphosphate + H(+)</text>
        <dbReference type="Rhea" id="RHEA:54564"/>
        <dbReference type="Rhea" id="RHEA-COMP:14193"/>
        <dbReference type="Rhea" id="RHEA-COMP:14917"/>
        <dbReference type="ChEBI" id="CHEBI:15377"/>
        <dbReference type="ChEBI" id="CHEBI:15378"/>
        <dbReference type="ChEBI" id="CHEBI:30616"/>
        <dbReference type="ChEBI" id="CHEBI:33019"/>
        <dbReference type="ChEBI" id="CHEBI:37565"/>
        <dbReference type="ChEBI" id="CHEBI:138282"/>
        <dbReference type="ChEBI" id="CHEBI:141847"/>
        <dbReference type="ChEBI" id="CHEBI:456215"/>
        <dbReference type="EC" id="2.7.7.79"/>
    </reaction>
</comment>
<comment type="cofactor">
    <cofactor evidence="1">
        <name>Mg(2+)</name>
        <dbReference type="ChEBI" id="CHEBI:18420"/>
    </cofactor>
    <text evidence="1">Binds 2 magnesium ions per subunit.</text>
</comment>
<comment type="subcellular location">
    <subcellularLocation>
        <location evidence="2">Nucleus</location>
        <location evidence="2">Nucleoplasm</location>
    </subcellularLocation>
</comment>
<comment type="similarity">
    <text evidence="3">Belongs to the tRNA(His) guanylyltransferase family.</text>
</comment>
<comment type="sequence caution" evidence="3">
    <conflict type="erroneous gene model prediction">
        <sequence resource="EMBL-CDS" id="AAD24854"/>
    </conflict>
</comment>
<reference key="1">
    <citation type="journal article" date="1999" name="Nature">
        <title>Sequence and analysis of chromosome 2 of the plant Arabidopsis thaliana.</title>
        <authorList>
            <person name="Lin X."/>
            <person name="Kaul S."/>
            <person name="Rounsley S.D."/>
            <person name="Shea T.P."/>
            <person name="Benito M.-I."/>
            <person name="Town C.D."/>
            <person name="Fujii C.Y."/>
            <person name="Mason T.M."/>
            <person name="Bowman C.L."/>
            <person name="Barnstead M.E."/>
            <person name="Feldblyum T.V."/>
            <person name="Buell C.R."/>
            <person name="Ketchum K.A."/>
            <person name="Lee J.J."/>
            <person name="Ronning C.M."/>
            <person name="Koo H.L."/>
            <person name="Moffat K.S."/>
            <person name="Cronin L.A."/>
            <person name="Shen M."/>
            <person name="Pai G."/>
            <person name="Van Aken S."/>
            <person name="Umayam L."/>
            <person name="Tallon L.J."/>
            <person name="Gill J.E."/>
            <person name="Adams M.D."/>
            <person name="Carrera A.J."/>
            <person name="Creasy T.H."/>
            <person name="Goodman H.M."/>
            <person name="Somerville C.R."/>
            <person name="Copenhaver G.P."/>
            <person name="Preuss D."/>
            <person name="Nierman W.C."/>
            <person name="White O."/>
            <person name="Eisen J.A."/>
            <person name="Salzberg S.L."/>
            <person name="Fraser C.M."/>
            <person name="Venter J.C."/>
        </authorList>
    </citation>
    <scope>NUCLEOTIDE SEQUENCE [LARGE SCALE GENOMIC DNA]</scope>
    <source>
        <strain>cv. Columbia</strain>
    </source>
</reference>
<reference key="2">
    <citation type="journal article" date="2017" name="Plant J.">
        <title>Araport11: a complete reannotation of the Arabidopsis thaliana reference genome.</title>
        <authorList>
            <person name="Cheng C.Y."/>
            <person name="Krishnakumar V."/>
            <person name="Chan A.P."/>
            <person name="Thibaud-Nissen F."/>
            <person name="Schobel S."/>
            <person name="Town C.D."/>
        </authorList>
    </citation>
    <scope>GENOME REANNOTATION</scope>
    <source>
        <strain>cv. Columbia</strain>
    </source>
</reference>
<reference key="3">
    <citation type="journal article" date="2007" name="Mol. Cell. Proteomics">
        <title>Multidimensional protein identification technology (MudPIT) analysis of ubiquitinated proteins in plants.</title>
        <authorList>
            <person name="Maor R."/>
            <person name="Jones A."/>
            <person name="Nuehse T.S."/>
            <person name="Studholme D.J."/>
            <person name="Peck S.C."/>
            <person name="Shirasu K."/>
        </authorList>
    </citation>
    <scope>UBIQUITINATION [LARGE SCALE ANALYSIS] AT LYS-397 AND LYS-403</scope>
    <scope>IDENTIFICATION BY MASS SPECTROMETRY [LARGE SCALE ANALYSIS]</scope>
    <source>
        <strain>cv. Landsberg erecta</strain>
    </source>
</reference>
<reference key="4">
    <citation type="journal article" date="2010" name="Nucleic Acids Res.">
        <title>Plant mitochondria use two pathways for the biogenesis of tRNAHis.</title>
        <authorList>
            <person name="Placido A."/>
            <person name="Sieber F."/>
            <person name="Gobert A."/>
            <person name="Gallerani R."/>
            <person name="Giege P."/>
            <person name="Marechal-Drouard L."/>
        </authorList>
    </citation>
    <scope>FUNCTION</scope>
    <scope>CATALYTIC ACTIVITY</scope>
    <scope>SUBCELLULAR LOCATION</scope>
</reference>